<comment type="function">
    <text evidence="1">This b-type cytochrome is tightly associated with the reaction center of photosystem II (PSII). PSII is a light-driven water:plastoquinone oxidoreductase that uses light energy to abstract electrons from H(2)O, generating O(2) and a proton gradient subsequently used for ATP formation. It consists of a core antenna complex that captures photons, and an electron transfer chain that converts photonic excitation into a charge separation.</text>
</comment>
<comment type="cofactor">
    <cofactor evidence="1">
        <name>heme b</name>
        <dbReference type="ChEBI" id="CHEBI:60344"/>
    </cofactor>
    <text evidence="1">With its partner (PsbF) binds heme. PSII binds additional chlorophylls, carotenoids and specific lipids.</text>
</comment>
<comment type="subunit">
    <text evidence="1">Heterodimer of an alpha subunit and a beta subunit. PSII is composed of 1 copy each of membrane proteins PsbA, PsbB, PsbC, PsbD, PsbE, PsbF, PsbH, PsbI, PsbJ, PsbK, PsbL, PsbM, PsbT, PsbX, PsbY, PsbZ, Psb30/Ycf12, at least 3 peripheral proteins of the oxygen-evolving complex and a large number of cofactors. It forms dimeric complexes.</text>
</comment>
<comment type="subcellular location">
    <subcellularLocation>
        <location evidence="1">Plastid</location>
        <location evidence="1">Chloroplast thylakoid membrane</location>
        <topology evidence="1">Single-pass membrane protein</topology>
    </subcellularLocation>
</comment>
<comment type="similarity">
    <text evidence="1">Belongs to the PsbE/PsbF family.</text>
</comment>
<name>PSBE_CITSI</name>
<sequence>MSGSTGERSFADIITSIRYWVIHSITIPSLFIAGWLFVSTGLAYDVFGSPRPNEYFTESRQGIPLITGRFDSLEQLNEFSRSF</sequence>
<geneLocation type="chloroplast"/>
<evidence type="ECO:0000255" key="1">
    <source>
        <dbReference type="HAMAP-Rule" id="MF_00642"/>
    </source>
</evidence>
<gene>
    <name evidence="1" type="primary">psbE</name>
</gene>
<protein>
    <recommendedName>
        <fullName evidence="1">Cytochrome b559 subunit alpha</fullName>
    </recommendedName>
    <alternativeName>
        <fullName evidence="1">PSII reaction center subunit V</fullName>
    </alternativeName>
</protein>
<feature type="chain" id="PRO_0000275703" description="Cytochrome b559 subunit alpha">
    <location>
        <begin position="1"/>
        <end position="83"/>
    </location>
</feature>
<feature type="transmembrane region" description="Helical" evidence="1">
    <location>
        <begin position="21"/>
        <end position="35"/>
    </location>
</feature>
<feature type="binding site" description="axial binding residue" evidence="1">
    <location>
        <position position="23"/>
    </location>
    <ligand>
        <name>heme</name>
        <dbReference type="ChEBI" id="CHEBI:30413"/>
        <note>ligand shared with beta subunit</note>
    </ligand>
    <ligandPart>
        <name>Fe</name>
        <dbReference type="ChEBI" id="CHEBI:18248"/>
    </ligandPart>
</feature>
<organism>
    <name type="scientific">Citrus sinensis</name>
    <name type="common">Sweet orange</name>
    <name type="synonym">Citrus aurantium var. sinensis</name>
    <dbReference type="NCBI Taxonomy" id="2711"/>
    <lineage>
        <taxon>Eukaryota</taxon>
        <taxon>Viridiplantae</taxon>
        <taxon>Streptophyta</taxon>
        <taxon>Embryophyta</taxon>
        <taxon>Tracheophyta</taxon>
        <taxon>Spermatophyta</taxon>
        <taxon>Magnoliopsida</taxon>
        <taxon>eudicotyledons</taxon>
        <taxon>Gunneridae</taxon>
        <taxon>Pentapetalae</taxon>
        <taxon>rosids</taxon>
        <taxon>malvids</taxon>
        <taxon>Sapindales</taxon>
        <taxon>Rutaceae</taxon>
        <taxon>Aurantioideae</taxon>
        <taxon>Citrus</taxon>
    </lineage>
</organism>
<keyword id="KW-0150">Chloroplast</keyword>
<keyword id="KW-0249">Electron transport</keyword>
<keyword id="KW-0349">Heme</keyword>
<keyword id="KW-0408">Iron</keyword>
<keyword id="KW-0472">Membrane</keyword>
<keyword id="KW-0479">Metal-binding</keyword>
<keyword id="KW-0602">Photosynthesis</keyword>
<keyword id="KW-0604">Photosystem II</keyword>
<keyword id="KW-0934">Plastid</keyword>
<keyword id="KW-0793">Thylakoid</keyword>
<keyword id="KW-0812">Transmembrane</keyword>
<keyword id="KW-1133">Transmembrane helix</keyword>
<keyword id="KW-0813">Transport</keyword>
<reference key="1">
    <citation type="journal article" date="2006" name="BMC Plant Biol.">
        <title>The complete chloroplast genome sequence of Citrus sinensis (L.) Osbeck var 'Ridge Pineapple': organization and phylogenetic relationships to other angiosperms.</title>
        <authorList>
            <person name="Bausher M.G."/>
            <person name="Singh N.D."/>
            <person name="Lee S.-B."/>
            <person name="Jansen R.K."/>
            <person name="Daniell H."/>
        </authorList>
    </citation>
    <scope>NUCLEOTIDE SEQUENCE [LARGE SCALE GENOMIC DNA]</scope>
    <source>
        <strain>cv. Osbeck var. Ridge Pineapple</strain>
    </source>
</reference>
<accession>Q09MG1</accession>
<dbReference type="EMBL" id="DQ864733">
    <property type="protein sequence ID" value="ABI49037.1"/>
    <property type="molecule type" value="Genomic_DNA"/>
</dbReference>
<dbReference type="RefSeq" id="YP_740492.1">
    <property type="nucleotide sequence ID" value="NC_008334.1"/>
</dbReference>
<dbReference type="SMR" id="Q09MG1"/>
<dbReference type="GeneID" id="4271222"/>
<dbReference type="KEGG" id="cit:4271222"/>
<dbReference type="OrthoDB" id="656645at71240"/>
<dbReference type="GO" id="GO:0009535">
    <property type="term" value="C:chloroplast thylakoid membrane"/>
    <property type="evidence" value="ECO:0007669"/>
    <property type="project" value="UniProtKB-SubCell"/>
</dbReference>
<dbReference type="GO" id="GO:0009539">
    <property type="term" value="C:photosystem II reaction center"/>
    <property type="evidence" value="ECO:0007669"/>
    <property type="project" value="InterPro"/>
</dbReference>
<dbReference type="GO" id="GO:0009055">
    <property type="term" value="F:electron transfer activity"/>
    <property type="evidence" value="ECO:0007669"/>
    <property type="project" value="UniProtKB-UniRule"/>
</dbReference>
<dbReference type="GO" id="GO:0020037">
    <property type="term" value="F:heme binding"/>
    <property type="evidence" value="ECO:0007669"/>
    <property type="project" value="InterPro"/>
</dbReference>
<dbReference type="GO" id="GO:0005506">
    <property type="term" value="F:iron ion binding"/>
    <property type="evidence" value="ECO:0007669"/>
    <property type="project" value="UniProtKB-UniRule"/>
</dbReference>
<dbReference type="GO" id="GO:0009767">
    <property type="term" value="P:photosynthetic electron transport chain"/>
    <property type="evidence" value="ECO:0007669"/>
    <property type="project" value="InterPro"/>
</dbReference>
<dbReference type="Gene3D" id="1.20.5.860">
    <property type="entry name" value="Photosystem II cytochrome b559, alpha subunit"/>
    <property type="match status" value="1"/>
</dbReference>
<dbReference type="HAMAP" id="MF_00642">
    <property type="entry name" value="PSII_PsbE"/>
    <property type="match status" value="1"/>
</dbReference>
<dbReference type="InterPro" id="IPR006217">
    <property type="entry name" value="PSII_cyt_b559_asu"/>
</dbReference>
<dbReference type="InterPro" id="IPR037025">
    <property type="entry name" value="PSII_cyt_b559_asu_sf"/>
</dbReference>
<dbReference type="InterPro" id="IPR006216">
    <property type="entry name" value="PSII_cyt_b559_CS"/>
</dbReference>
<dbReference type="InterPro" id="IPR013081">
    <property type="entry name" value="PSII_cyt_b559_N"/>
</dbReference>
<dbReference type="InterPro" id="IPR013082">
    <property type="entry name" value="PSII_cytb559_asu_lum"/>
</dbReference>
<dbReference type="NCBIfam" id="TIGR01332">
    <property type="entry name" value="cyt_b559_alpha"/>
    <property type="match status" value="1"/>
</dbReference>
<dbReference type="PANTHER" id="PTHR33391">
    <property type="entry name" value="CYTOCHROME B559 SUBUNIT BETA-RELATED"/>
    <property type="match status" value="1"/>
</dbReference>
<dbReference type="PANTHER" id="PTHR33391:SF9">
    <property type="entry name" value="CYTOCHROME B559 SUBUNIT BETA-RELATED"/>
    <property type="match status" value="1"/>
</dbReference>
<dbReference type="Pfam" id="PF00283">
    <property type="entry name" value="Cytochrom_B559"/>
    <property type="match status" value="1"/>
</dbReference>
<dbReference type="Pfam" id="PF00284">
    <property type="entry name" value="Cytochrom_B559a"/>
    <property type="match status" value="1"/>
</dbReference>
<dbReference type="PIRSF" id="PIRSF000036">
    <property type="entry name" value="PsbE"/>
    <property type="match status" value="1"/>
</dbReference>
<dbReference type="SUPFAM" id="SSF161045">
    <property type="entry name" value="Cytochrome b559 subunits"/>
    <property type="match status" value="1"/>
</dbReference>
<dbReference type="PROSITE" id="PS00537">
    <property type="entry name" value="CYTOCHROME_B559"/>
    <property type="match status" value="1"/>
</dbReference>
<proteinExistence type="inferred from homology"/>